<accession>Q6MQ03</accession>
<protein>
    <recommendedName>
        <fullName evidence="1">Aminomethyltransferase</fullName>
        <ecNumber evidence="1">2.1.2.10</ecNumber>
    </recommendedName>
    <alternativeName>
        <fullName evidence="1">Glycine cleavage system T protein</fullName>
    </alternativeName>
</protein>
<feature type="chain" id="PRO_0000122545" description="Aminomethyltransferase">
    <location>
        <begin position="1"/>
        <end position="360"/>
    </location>
</feature>
<comment type="function">
    <text evidence="1">The glycine cleavage system catalyzes the degradation of glycine.</text>
</comment>
<comment type="catalytic activity">
    <reaction evidence="1">
        <text>N(6)-[(R)-S(8)-aminomethyldihydrolipoyl]-L-lysyl-[protein] + (6S)-5,6,7,8-tetrahydrofolate = N(6)-[(R)-dihydrolipoyl]-L-lysyl-[protein] + (6R)-5,10-methylene-5,6,7,8-tetrahydrofolate + NH4(+)</text>
        <dbReference type="Rhea" id="RHEA:16945"/>
        <dbReference type="Rhea" id="RHEA-COMP:10475"/>
        <dbReference type="Rhea" id="RHEA-COMP:10492"/>
        <dbReference type="ChEBI" id="CHEBI:15636"/>
        <dbReference type="ChEBI" id="CHEBI:28938"/>
        <dbReference type="ChEBI" id="CHEBI:57453"/>
        <dbReference type="ChEBI" id="CHEBI:83100"/>
        <dbReference type="ChEBI" id="CHEBI:83143"/>
        <dbReference type="EC" id="2.1.2.10"/>
    </reaction>
</comment>
<comment type="subunit">
    <text evidence="1">The glycine cleavage system is composed of four proteins: P, T, L and H.</text>
</comment>
<comment type="similarity">
    <text evidence="1">Belongs to the GcvT family.</text>
</comment>
<reference key="1">
    <citation type="journal article" date="2004" name="Science">
        <title>A predator unmasked: life cycle of Bdellovibrio bacteriovorus from a genomic perspective.</title>
        <authorList>
            <person name="Rendulic S."/>
            <person name="Jagtap P."/>
            <person name="Rosinus A."/>
            <person name="Eppinger M."/>
            <person name="Baar C."/>
            <person name="Lanz C."/>
            <person name="Keller H."/>
            <person name="Lambert C."/>
            <person name="Evans K.J."/>
            <person name="Goesmann A."/>
            <person name="Meyer F."/>
            <person name="Sockett R.E."/>
            <person name="Schuster S.C."/>
        </authorList>
    </citation>
    <scope>NUCLEOTIDE SEQUENCE [LARGE SCALE GENOMIC DNA]</scope>
    <source>
        <strain>ATCC 15356 / DSM 50701 / NCIMB 9529 / HD100</strain>
    </source>
</reference>
<organism>
    <name type="scientific">Bdellovibrio bacteriovorus (strain ATCC 15356 / DSM 50701 / NCIMB 9529 / HD100)</name>
    <dbReference type="NCBI Taxonomy" id="264462"/>
    <lineage>
        <taxon>Bacteria</taxon>
        <taxon>Pseudomonadati</taxon>
        <taxon>Bdellovibrionota</taxon>
        <taxon>Bdellovibrionia</taxon>
        <taxon>Bdellovibrionales</taxon>
        <taxon>Pseudobdellovibrionaceae</taxon>
        <taxon>Bdellovibrio</taxon>
    </lineage>
</organism>
<evidence type="ECO:0000255" key="1">
    <source>
        <dbReference type="HAMAP-Rule" id="MF_00259"/>
    </source>
</evidence>
<keyword id="KW-0032">Aminotransferase</keyword>
<keyword id="KW-1185">Reference proteome</keyword>
<keyword id="KW-0808">Transferase</keyword>
<name>GCST_BDEBA</name>
<gene>
    <name evidence="1" type="primary">gcvT</name>
    <name type="ordered locus">Bd0684</name>
</gene>
<proteinExistence type="inferred from homology"/>
<dbReference type="EC" id="2.1.2.10" evidence="1"/>
<dbReference type="EMBL" id="BX842647">
    <property type="protein sequence ID" value="CAE78644.1"/>
    <property type="molecule type" value="Genomic_DNA"/>
</dbReference>
<dbReference type="RefSeq" id="WP_011163246.1">
    <property type="nucleotide sequence ID" value="NC_005363.1"/>
</dbReference>
<dbReference type="SMR" id="Q6MQ03"/>
<dbReference type="STRING" id="264462.Bd0684"/>
<dbReference type="GeneID" id="93011773"/>
<dbReference type="KEGG" id="bba:Bd0684"/>
<dbReference type="eggNOG" id="COG0404">
    <property type="taxonomic scope" value="Bacteria"/>
</dbReference>
<dbReference type="HOGENOM" id="CLU_007884_10_2_7"/>
<dbReference type="Proteomes" id="UP000008080">
    <property type="component" value="Chromosome"/>
</dbReference>
<dbReference type="GO" id="GO:0005829">
    <property type="term" value="C:cytosol"/>
    <property type="evidence" value="ECO:0007669"/>
    <property type="project" value="TreeGrafter"/>
</dbReference>
<dbReference type="GO" id="GO:0005960">
    <property type="term" value="C:glycine cleavage complex"/>
    <property type="evidence" value="ECO:0007669"/>
    <property type="project" value="InterPro"/>
</dbReference>
<dbReference type="GO" id="GO:0004047">
    <property type="term" value="F:aminomethyltransferase activity"/>
    <property type="evidence" value="ECO:0007669"/>
    <property type="project" value="UniProtKB-UniRule"/>
</dbReference>
<dbReference type="GO" id="GO:0008483">
    <property type="term" value="F:transaminase activity"/>
    <property type="evidence" value="ECO:0007669"/>
    <property type="project" value="UniProtKB-KW"/>
</dbReference>
<dbReference type="GO" id="GO:0019464">
    <property type="term" value="P:glycine decarboxylation via glycine cleavage system"/>
    <property type="evidence" value="ECO:0007669"/>
    <property type="project" value="UniProtKB-UniRule"/>
</dbReference>
<dbReference type="FunFam" id="2.40.30.110:FF:000003">
    <property type="entry name" value="Aminomethyltransferase"/>
    <property type="match status" value="1"/>
</dbReference>
<dbReference type="FunFam" id="3.30.70.1400:FF:000001">
    <property type="entry name" value="Aminomethyltransferase"/>
    <property type="match status" value="1"/>
</dbReference>
<dbReference type="Gene3D" id="2.40.30.110">
    <property type="entry name" value="Aminomethyltransferase beta-barrel domains"/>
    <property type="match status" value="1"/>
</dbReference>
<dbReference type="Gene3D" id="3.30.70.1400">
    <property type="entry name" value="Aminomethyltransferase beta-barrel domains"/>
    <property type="match status" value="1"/>
</dbReference>
<dbReference type="Gene3D" id="4.10.1250.10">
    <property type="entry name" value="Aminomethyltransferase fragment"/>
    <property type="match status" value="1"/>
</dbReference>
<dbReference type="Gene3D" id="3.30.1360.120">
    <property type="entry name" value="Probable tRNA modification gtpase trme, domain 1"/>
    <property type="match status" value="1"/>
</dbReference>
<dbReference type="HAMAP" id="MF_00259">
    <property type="entry name" value="GcvT"/>
    <property type="match status" value="1"/>
</dbReference>
<dbReference type="InterPro" id="IPR006223">
    <property type="entry name" value="GCS_T"/>
</dbReference>
<dbReference type="InterPro" id="IPR022903">
    <property type="entry name" value="GCS_T_bac"/>
</dbReference>
<dbReference type="InterPro" id="IPR013977">
    <property type="entry name" value="GCST_C"/>
</dbReference>
<dbReference type="InterPro" id="IPR006222">
    <property type="entry name" value="GCV_T_N"/>
</dbReference>
<dbReference type="InterPro" id="IPR028896">
    <property type="entry name" value="GcvT/YgfZ/DmdA"/>
</dbReference>
<dbReference type="InterPro" id="IPR029043">
    <property type="entry name" value="GcvT/YgfZ_C"/>
</dbReference>
<dbReference type="InterPro" id="IPR027266">
    <property type="entry name" value="TrmE/GcvT_dom1"/>
</dbReference>
<dbReference type="NCBIfam" id="TIGR00528">
    <property type="entry name" value="gcvT"/>
    <property type="match status" value="1"/>
</dbReference>
<dbReference type="NCBIfam" id="NF001567">
    <property type="entry name" value="PRK00389.1"/>
    <property type="match status" value="1"/>
</dbReference>
<dbReference type="PANTHER" id="PTHR43757">
    <property type="entry name" value="AMINOMETHYLTRANSFERASE"/>
    <property type="match status" value="1"/>
</dbReference>
<dbReference type="PANTHER" id="PTHR43757:SF2">
    <property type="entry name" value="AMINOMETHYLTRANSFERASE, MITOCHONDRIAL"/>
    <property type="match status" value="1"/>
</dbReference>
<dbReference type="Pfam" id="PF01571">
    <property type="entry name" value="GCV_T"/>
    <property type="match status" value="1"/>
</dbReference>
<dbReference type="Pfam" id="PF08669">
    <property type="entry name" value="GCV_T_C"/>
    <property type="match status" value="1"/>
</dbReference>
<dbReference type="PIRSF" id="PIRSF006487">
    <property type="entry name" value="GcvT"/>
    <property type="match status" value="1"/>
</dbReference>
<dbReference type="SUPFAM" id="SSF101790">
    <property type="entry name" value="Aminomethyltransferase beta-barrel domain"/>
    <property type="match status" value="1"/>
</dbReference>
<dbReference type="SUPFAM" id="SSF103025">
    <property type="entry name" value="Folate-binding domain"/>
    <property type="match status" value="1"/>
</dbReference>
<sequence>MKKTPLADTHEKLGARMVDFAGWYMPVQYIGLREEHNNVRTNVGLFDVSHMGEVRVKGPKALETLEWLTTNDVSKLNDGEAQYSLLPNDQGGLVDDIIVYCLSKDSDYLVCVNASNKDKDFAWMTKHNKGADITDESDLWGQIAIQGPKALELCDRVFDIKVSEMKSFTVKSGTFKGHKIMIATTGYTGEKGCEVFVEAAGTADLWMTLLEKGKDLGCMGIGLGARDTLRTEMKYSLYGHEIDDTTNPYEAGLGWVIKPAKKDFMNKAQIVGKKEAGLTRNLVGFKMLEKGIPRQGYSLFSFDNKEIGKVTSGTHSPTLDEPIGIAFIDVAYAKEGTEFLLDIRGRKVKAVVCKTPFVTK</sequence>